<dbReference type="EMBL" id="NKLS02000010">
    <property type="status" value="NOT_ANNOTATED_CDS"/>
    <property type="molecule type" value="Genomic_DNA"/>
</dbReference>
<dbReference type="EMBL" id="AF103904">
    <property type="protein sequence ID" value="AAF16866.1"/>
    <property type="molecule type" value="Genomic_DNA"/>
</dbReference>
<dbReference type="RefSeq" id="XP_002690986.1">
    <property type="nucleotide sequence ID" value="XM_002690940.7"/>
</dbReference>
<dbReference type="RefSeq" id="XP_015320624.1">
    <property type="nucleotide sequence ID" value="XM_015465138.1"/>
</dbReference>
<dbReference type="RefSeq" id="XP_015320625.1">
    <property type="nucleotide sequence ID" value="XM_015465139.1"/>
</dbReference>
<dbReference type="RefSeq" id="XP_015328696.1">
    <property type="nucleotide sequence ID" value="XM_015473210.1"/>
</dbReference>
<dbReference type="RefSeq" id="XP_015328697.1">
    <property type="nucleotide sequence ID" value="XM_015473211.3"/>
</dbReference>
<dbReference type="RefSeq" id="XP_613527.3">
    <property type="nucleotide sequence ID" value="XM_613527.9"/>
</dbReference>
<dbReference type="SMR" id="Q9TTF3"/>
<dbReference type="FunCoup" id="Q9TTF3">
    <property type="interactions" value="154"/>
</dbReference>
<dbReference type="STRING" id="9913.ENSBTAP00000053701"/>
<dbReference type="Ensembl" id="ENSBTAT00000061150.4">
    <property type="protein sequence ID" value="ENSBTAP00000053701.2"/>
    <property type="gene ID" value="ENSBTAG00000021019.8"/>
</dbReference>
<dbReference type="GeneID" id="540869"/>
<dbReference type="KEGG" id="bta:540869"/>
<dbReference type="CTD" id="7782"/>
<dbReference type="VGNC" id="VGNC:49968">
    <property type="gene designation" value="SLC30A4"/>
</dbReference>
<dbReference type="eggNOG" id="KOG1482">
    <property type="taxonomic scope" value="Eukaryota"/>
</dbReference>
<dbReference type="GeneTree" id="ENSGT00940000157545"/>
<dbReference type="HOGENOM" id="CLU_013430_0_1_1"/>
<dbReference type="InParanoid" id="Q9TTF3"/>
<dbReference type="OMA" id="PCDNCNK"/>
<dbReference type="OrthoDB" id="9944568at2759"/>
<dbReference type="Proteomes" id="UP000009136">
    <property type="component" value="Chromosome 10"/>
</dbReference>
<dbReference type="GO" id="GO:0010008">
    <property type="term" value="C:endosome membrane"/>
    <property type="evidence" value="ECO:0000250"/>
    <property type="project" value="UniProtKB"/>
</dbReference>
<dbReference type="GO" id="GO:0005770">
    <property type="term" value="C:late endosome"/>
    <property type="evidence" value="ECO:0000250"/>
    <property type="project" value="UniProtKB"/>
</dbReference>
<dbReference type="GO" id="GO:0031902">
    <property type="term" value="C:late endosome membrane"/>
    <property type="evidence" value="ECO:0007669"/>
    <property type="project" value="UniProtKB-SubCell"/>
</dbReference>
<dbReference type="GO" id="GO:0005765">
    <property type="term" value="C:lysosomal membrane"/>
    <property type="evidence" value="ECO:0007669"/>
    <property type="project" value="UniProtKB-SubCell"/>
</dbReference>
<dbReference type="GO" id="GO:0005886">
    <property type="term" value="C:plasma membrane"/>
    <property type="evidence" value="ECO:0000318"/>
    <property type="project" value="GO_Central"/>
</dbReference>
<dbReference type="GO" id="GO:0015297">
    <property type="term" value="F:antiporter activity"/>
    <property type="evidence" value="ECO:0007669"/>
    <property type="project" value="UniProtKB-KW"/>
</dbReference>
<dbReference type="GO" id="GO:0046872">
    <property type="term" value="F:metal ion binding"/>
    <property type="evidence" value="ECO:0007669"/>
    <property type="project" value="UniProtKB-KW"/>
</dbReference>
<dbReference type="GO" id="GO:0005385">
    <property type="term" value="F:zinc ion transmembrane transporter activity"/>
    <property type="evidence" value="ECO:0000318"/>
    <property type="project" value="GO_Central"/>
</dbReference>
<dbReference type="GO" id="GO:0009636">
    <property type="term" value="P:response to toxic substance"/>
    <property type="evidence" value="ECO:0007669"/>
    <property type="project" value="Ensembl"/>
</dbReference>
<dbReference type="GO" id="GO:0010043">
    <property type="term" value="P:response to zinc ion"/>
    <property type="evidence" value="ECO:0000318"/>
    <property type="project" value="GO_Central"/>
</dbReference>
<dbReference type="GO" id="GO:0140882">
    <property type="term" value="P:zinc export across plasma membrane"/>
    <property type="evidence" value="ECO:0007669"/>
    <property type="project" value="Ensembl"/>
</dbReference>
<dbReference type="GO" id="GO:0140916">
    <property type="term" value="P:zinc ion import into lysosome"/>
    <property type="evidence" value="ECO:0007669"/>
    <property type="project" value="Ensembl"/>
</dbReference>
<dbReference type="GO" id="GO:0071577">
    <property type="term" value="P:zinc ion transmembrane transport"/>
    <property type="evidence" value="ECO:0000250"/>
    <property type="project" value="UniProtKB"/>
</dbReference>
<dbReference type="FunFam" id="1.20.1510.10:FF:000017">
    <property type="entry name" value="zinc transporter 4 isoform X1"/>
    <property type="match status" value="1"/>
</dbReference>
<dbReference type="Gene3D" id="1.20.1510.10">
    <property type="entry name" value="Cation efflux protein transmembrane domain"/>
    <property type="match status" value="1"/>
</dbReference>
<dbReference type="InterPro" id="IPR002524">
    <property type="entry name" value="Cation_efflux"/>
</dbReference>
<dbReference type="InterPro" id="IPR036837">
    <property type="entry name" value="Cation_efflux_CTD_sf"/>
</dbReference>
<dbReference type="InterPro" id="IPR027469">
    <property type="entry name" value="Cation_efflux_TMD_sf"/>
</dbReference>
<dbReference type="InterPro" id="IPR050681">
    <property type="entry name" value="CDF/SLC30A"/>
</dbReference>
<dbReference type="NCBIfam" id="TIGR01297">
    <property type="entry name" value="CDF"/>
    <property type="match status" value="1"/>
</dbReference>
<dbReference type="PANTHER" id="PTHR11562">
    <property type="entry name" value="CATION EFFLUX PROTEIN/ ZINC TRANSPORTER"/>
    <property type="match status" value="1"/>
</dbReference>
<dbReference type="PANTHER" id="PTHR11562:SF27">
    <property type="entry name" value="PROTON-COUPLED ZINC ANTIPORTER SLC30A4-RELATED"/>
    <property type="match status" value="1"/>
</dbReference>
<dbReference type="Pfam" id="PF01545">
    <property type="entry name" value="Cation_efflux"/>
    <property type="match status" value="1"/>
</dbReference>
<dbReference type="SUPFAM" id="SSF160240">
    <property type="entry name" value="Cation efflux protein cytoplasmic domain-like"/>
    <property type="match status" value="1"/>
</dbReference>
<dbReference type="SUPFAM" id="SSF161111">
    <property type="entry name" value="Cation efflux protein transmembrane domain-like"/>
    <property type="match status" value="1"/>
</dbReference>
<keyword id="KW-0050">Antiport</keyword>
<keyword id="KW-0967">Endosome</keyword>
<keyword id="KW-0406">Ion transport</keyword>
<keyword id="KW-0458">Lysosome</keyword>
<keyword id="KW-0472">Membrane</keyword>
<keyword id="KW-0479">Metal-binding</keyword>
<keyword id="KW-1185">Reference proteome</keyword>
<keyword id="KW-0812">Transmembrane</keyword>
<keyword id="KW-1133">Transmembrane helix</keyword>
<keyword id="KW-0813">Transport</keyword>
<keyword id="KW-0862">Zinc</keyword>
<keyword id="KW-0864">Zinc transport</keyword>
<accession>Q9TTF3</accession>
<protein>
    <recommendedName>
        <fullName evidence="6">Probable proton-coupled zinc antiporter SLC30A4</fullName>
    </recommendedName>
    <alternativeName>
        <fullName evidence="1">Solute carrier family 30 member 4</fullName>
    </alternativeName>
    <alternativeName>
        <fullName evidence="1">Zinc transporter 4</fullName>
        <shortName>ZnT-4</shortName>
    </alternativeName>
</protein>
<name>ZNT4_BOVIN</name>
<evidence type="ECO:0000250" key="1">
    <source>
        <dbReference type="UniProtKB" id="O14863"/>
    </source>
</evidence>
<evidence type="ECO:0000250" key="2">
    <source>
        <dbReference type="UniProtKB" id="O35149"/>
    </source>
</evidence>
<evidence type="ECO:0000250" key="3">
    <source>
        <dbReference type="UniProtKB" id="O55174"/>
    </source>
</evidence>
<evidence type="ECO:0000250" key="4">
    <source>
        <dbReference type="UniProtKB" id="Q8IWU4"/>
    </source>
</evidence>
<evidence type="ECO:0000255" key="5"/>
<evidence type="ECO:0000305" key="6"/>
<sequence>MAGSGAWKRLKSMLRKDDAPLFLNDTSAFDFSDEVGDEGLSRFNKLRVVVADDGSEAPERPANGAHSALQADDDSLLDQDLPLTNSQLSLKADPCDNCSKQRELLKQRKVKTRLTIAAVLYLLFMIGELVGGYIANSLAIMTDALHMLTDLSAIILTLLALWLSSKSPTKRFTFGFHRLEVLSAMISVLLVYILMGFLLYEAVQRTIHMKYEINGDIMLITAAIGVAVNVIMGFLLNQSGHHHAHSHSLPSNSPTTGPRCGHNQGQDSLAVRAAFVHALGDLVQSVGVLIAAYIIRFKPEYRIADPICTYVFSLLVAFTTFRIIWDTVVIILEGVPSHLNVDYIKEALMKIEDVHSVEDLNIWSLTSGKPTAIVHIQLIPGSSSKWEEVQSKAKHLLLNTFGMYKCTIQLQSYRQEVNRTCANCQSSSS</sequence>
<feature type="chain" id="PRO_0000206098" description="Probable proton-coupled zinc antiporter SLC30A4">
    <location>
        <begin position="1"/>
        <end position="429"/>
    </location>
</feature>
<feature type="topological domain" description="Cytoplasmic" evidence="6">
    <location>
        <begin position="1"/>
        <end position="113"/>
    </location>
</feature>
<feature type="transmembrane region" description="Helical" evidence="5">
    <location>
        <begin position="114"/>
        <end position="134"/>
    </location>
</feature>
<feature type="topological domain" description="Lumenal" evidence="6">
    <location>
        <begin position="135"/>
        <end position="143"/>
    </location>
</feature>
<feature type="transmembrane region" description="Helical" evidence="5">
    <location>
        <begin position="144"/>
        <end position="164"/>
    </location>
</feature>
<feature type="topological domain" description="Cytoplasmic" evidence="6">
    <location>
        <begin position="165"/>
        <end position="178"/>
    </location>
</feature>
<feature type="transmembrane region" description="Helical" evidence="5">
    <location>
        <begin position="179"/>
        <end position="199"/>
    </location>
</feature>
<feature type="topological domain" description="Lumenal" evidence="6">
    <location>
        <begin position="200"/>
        <end position="216"/>
    </location>
</feature>
<feature type="transmembrane region" description="Helical" evidence="5">
    <location>
        <begin position="217"/>
        <end position="237"/>
    </location>
</feature>
<feature type="topological domain" description="Cytoplasmic" evidence="6">
    <location>
        <begin position="238"/>
        <end position="274"/>
    </location>
</feature>
<feature type="transmembrane region" description="Helical" evidence="5">
    <location>
        <begin position="275"/>
        <end position="295"/>
    </location>
</feature>
<feature type="topological domain" description="Lumenal" evidence="6">
    <location>
        <begin position="296"/>
        <end position="310"/>
    </location>
</feature>
<feature type="transmembrane region" description="Helical" evidence="5">
    <location>
        <begin position="311"/>
        <end position="331"/>
    </location>
</feature>
<feature type="topological domain" description="Cytoplasmic" evidence="6">
    <location>
        <begin position="332"/>
        <end position="429"/>
    </location>
</feature>
<feature type="region of interest" description="Zinc binding" evidence="3">
    <location>
        <begin position="240"/>
        <end position="264"/>
    </location>
</feature>
<feature type="binding site" evidence="4">
    <location>
        <position position="146"/>
    </location>
    <ligand>
        <name>Zn(2+)</name>
        <dbReference type="ChEBI" id="CHEBI:29105"/>
        <note>transported zinc</note>
    </ligand>
</feature>
<feature type="binding site" evidence="4">
    <location>
        <position position="150"/>
    </location>
    <ligand>
        <name>Zn(2+)</name>
        <dbReference type="ChEBI" id="CHEBI:29105"/>
        <note>transported zinc</note>
    </ligand>
</feature>
<feature type="binding site" evidence="4">
    <location>
        <position position="277"/>
    </location>
    <ligand>
        <name>Zn(2+)</name>
        <dbReference type="ChEBI" id="CHEBI:29105"/>
        <note>transported zinc</note>
    </ligand>
</feature>
<feature type="binding site" evidence="4">
    <location>
        <position position="281"/>
    </location>
    <ligand>
        <name>Zn(2+)</name>
        <dbReference type="ChEBI" id="CHEBI:29105"/>
        <note>transported zinc</note>
    </ligand>
</feature>
<reference key="1">
    <citation type="journal article" date="2009" name="Genome Biol.">
        <title>A whole-genome assembly of the domestic cow, Bos taurus.</title>
        <authorList>
            <person name="Zimin A.V."/>
            <person name="Delcher A.L."/>
            <person name="Florea L."/>
            <person name="Kelley D.R."/>
            <person name="Schatz M.C."/>
            <person name="Puiu D."/>
            <person name="Hanrahan F."/>
            <person name="Pertea G."/>
            <person name="Van Tassell C.P."/>
            <person name="Sonstegard T.S."/>
            <person name="Marcais G."/>
            <person name="Roberts M."/>
            <person name="Subramanian P."/>
            <person name="Yorke J.A."/>
            <person name="Salzberg S.L."/>
        </authorList>
    </citation>
    <scope>NUCLEOTIDE SEQUENCE [LARGE SCALE GENOMIC DNA]</scope>
    <source>
        <strain>Hereford</strain>
    </source>
</reference>
<reference key="2">
    <citation type="journal article" date="1999" name="Anim. Genet.">
        <title>Physical and linkage mapping of the bovine zinc transporter 4 (ZNT4) gene to chromosome 10.</title>
        <authorList>
            <person name="Tammen I."/>
            <person name="Warren W.C."/>
            <person name="Raadsma H.W."/>
        </authorList>
    </citation>
    <scope>NUCLEOTIDE SEQUENCE [GENOMIC DNA] OF 240-289</scope>
</reference>
<proteinExistence type="inferred from homology"/>
<gene>
    <name evidence="1" type="primary">SLC30A4</name>
</gene>
<comment type="function">
    <text evidence="1 2">Probable proton-coupled zinc ion antiporter mediating zinc import from cytoplasm potentially into the endocytic compartment (By similarity). Controls zinc deposition in milk (By similarity).</text>
</comment>
<comment type="catalytic activity">
    <reaction evidence="1">
        <text>Zn(2+)(in) + 2 H(+)(out) = Zn(2+)(out) + 2 H(+)(in)</text>
        <dbReference type="Rhea" id="RHEA:72627"/>
        <dbReference type="ChEBI" id="CHEBI:15378"/>
        <dbReference type="ChEBI" id="CHEBI:29105"/>
    </reaction>
</comment>
<comment type="subunit">
    <text evidence="1">Homodimerization could regulate efficiency for zinc transport. Interacts with TMEM163 (By similarity).</text>
</comment>
<comment type="subcellular location">
    <subcellularLocation>
        <location evidence="3">Endosome membrane</location>
        <topology evidence="5">Multi-pass membrane protein</topology>
    </subcellularLocation>
    <subcellularLocation>
        <location evidence="1">Late endosome membrane</location>
        <topology evidence="5">Multi-pass membrane protein</topology>
    </subcellularLocation>
    <subcellularLocation>
        <location evidence="1">Lysosome membrane</location>
        <topology evidence="5">Multi-pass membrane protein</topology>
    </subcellularLocation>
    <text evidence="3">Enriched in vesicles within the basal region of epithelial cells.</text>
</comment>
<comment type="similarity">
    <text evidence="6">Belongs to the cation diffusion facilitator (CDF) transporter (TC 2.A.4) family. SLC30A subfamily.</text>
</comment>
<organism>
    <name type="scientific">Bos taurus</name>
    <name type="common">Bovine</name>
    <dbReference type="NCBI Taxonomy" id="9913"/>
    <lineage>
        <taxon>Eukaryota</taxon>
        <taxon>Metazoa</taxon>
        <taxon>Chordata</taxon>
        <taxon>Craniata</taxon>
        <taxon>Vertebrata</taxon>
        <taxon>Euteleostomi</taxon>
        <taxon>Mammalia</taxon>
        <taxon>Eutheria</taxon>
        <taxon>Laurasiatheria</taxon>
        <taxon>Artiodactyla</taxon>
        <taxon>Ruminantia</taxon>
        <taxon>Pecora</taxon>
        <taxon>Bovidae</taxon>
        <taxon>Bovinae</taxon>
        <taxon>Bos</taxon>
    </lineage>
</organism>